<name>GPR33_MOUSE</name>
<accession>O88416</accession>
<keyword id="KW-1003">Cell membrane</keyword>
<keyword id="KW-1015">Disulfide bond</keyword>
<keyword id="KW-0297">G-protein coupled receptor</keyword>
<keyword id="KW-0325">Glycoprotein</keyword>
<keyword id="KW-0472">Membrane</keyword>
<keyword id="KW-0675">Receptor</keyword>
<keyword id="KW-1185">Reference proteome</keyword>
<keyword id="KW-0807">Transducer</keyword>
<keyword id="KW-0812">Transmembrane</keyword>
<keyword id="KW-1133">Transmembrane helix</keyword>
<gene>
    <name type="primary">Gpr33</name>
</gene>
<reference key="1">
    <citation type="journal article" date="1998" name="Genomics">
        <title>Cloning genes encoding receptors related to chemoattractant receptors.</title>
        <authorList>
            <person name="Marchese A."/>
            <person name="Nguyen T."/>
            <person name="Malik P."/>
            <person name="Xu S."/>
            <person name="Cheng R."/>
            <person name="Xie Z."/>
            <person name="Heng H.H.Q."/>
            <person name="George S.R."/>
            <person name="Kolakowski L.F. Jr."/>
            <person name="O'Dowd B.F."/>
        </authorList>
    </citation>
    <scope>NUCLEOTIDE SEQUENCE [MRNA]</scope>
</reference>
<reference key="2">
    <citation type="journal article" date="2004" name="Genome Res.">
        <title>The status, quality, and expansion of the NIH full-length cDNA project: the Mammalian Gene Collection (MGC).</title>
        <authorList>
            <consortium name="The MGC Project Team"/>
        </authorList>
    </citation>
    <scope>NUCLEOTIDE SEQUENCE [LARGE SCALE MRNA]</scope>
    <source>
        <strain>C57BL/6J</strain>
        <tissue>Thymus</tissue>
    </source>
</reference>
<reference key="3">
    <citation type="journal article" date="2005" name="J. Biol. Chem.">
        <title>The rise and fall of the chemoattractant receptor GPR33.</title>
        <authorList>
            <person name="Roempler H."/>
            <person name="Schulz A."/>
            <person name="Pitra C."/>
            <person name="Coop G."/>
            <person name="Przeworski M."/>
            <person name="Paeaebo S."/>
            <person name="Schoeneberg T."/>
        </authorList>
    </citation>
    <scope>TISSUE SPECIFICITY</scope>
</reference>
<comment type="function">
    <text>Orphan receptor; could be a chemoattractant receptor.</text>
</comment>
<comment type="subcellular location">
    <subcellularLocation>
        <location>Cell membrane</location>
        <topology>Multi-pass membrane protein</topology>
    </subcellularLocation>
</comment>
<comment type="tissue specificity">
    <text evidence="3">Expressed predominantly in lung, spleen and testis.</text>
</comment>
<comment type="similarity">
    <text evidence="2">Belongs to the G-protein coupled receptor 1 family.</text>
</comment>
<protein>
    <recommendedName>
        <fullName>Probable G-protein coupled receptor 33</fullName>
    </recommendedName>
</protein>
<proteinExistence type="evidence at transcript level"/>
<feature type="chain" id="PRO_0000069554" description="Probable G-protein coupled receptor 33">
    <location>
        <begin position="1"/>
        <end position="339"/>
    </location>
</feature>
<feature type="topological domain" description="Extracellular" evidence="1">
    <location>
        <begin position="1"/>
        <end position="30"/>
    </location>
</feature>
<feature type="transmembrane region" description="Helical; Name=1" evidence="1">
    <location>
        <begin position="31"/>
        <end position="53"/>
    </location>
</feature>
<feature type="topological domain" description="Cytoplasmic" evidence="1">
    <location>
        <begin position="54"/>
        <end position="64"/>
    </location>
</feature>
<feature type="transmembrane region" description="Helical; Name=2" evidence="1">
    <location>
        <begin position="65"/>
        <end position="86"/>
    </location>
</feature>
<feature type="topological domain" description="Extracellular" evidence="1">
    <location>
        <begin position="87"/>
        <end position="103"/>
    </location>
</feature>
<feature type="transmembrane region" description="Helical; Name=3" evidence="1">
    <location>
        <begin position="104"/>
        <end position="124"/>
    </location>
</feature>
<feature type="topological domain" description="Cytoplasmic" evidence="1">
    <location>
        <begin position="125"/>
        <end position="143"/>
    </location>
</feature>
<feature type="transmembrane region" description="Helical; Name=4" evidence="1">
    <location>
        <begin position="144"/>
        <end position="165"/>
    </location>
</feature>
<feature type="topological domain" description="Extracellular" evidence="1">
    <location>
        <begin position="166"/>
        <end position="209"/>
    </location>
</feature>
<feature type="transmembrane region" description="Helical; Name=5" evidence="1">
    <location>
        <begin position="210"/>
        <end position="230"/>
    </location>
</feature>
<feature type="topological domain" description="Cytoplasmic" evidence="1">
    <location>
        <begin position="231"/>
        <end position="246"/>
    </location>
</feature>
<feature type="transmembrane region" description="Helical; Name=6" evidence="1">
    <location>
        <begin position="247"/>
        <end position="268"/>
    </location>
</feature>
<feature type="topological domain" description="Extracellular" evidence="1">
    <location>
        <begin position="269"/>
        <end position="283"/>
    </location>
</feature>
<feature type="transmembrane region" description="Helical; Name=7" evidence="1">
    <location>
        <begin position="284"/>
        <end position="303"/>
    </location>
</feature>
<feature type="topological domain" description="Cytoplasmic" evidence="1">
    <location>
        <begin position="304"/>
        <end position="339"/>
    </location>
</feature>
<feature type="glycosylation site" description="N-linked (GlcNAc...) asparagine" evidence="1">
    <location>
        <position position="5"/>
    </location>
</feature>
<feature type="glycosylation site" description="N-linked (GlcNAc...) asparagine" evidence="1">
    <location>
        <position position="12"/>
    </location>
</feature>
<feature type="glycosylation site" description="N-linked (GlcNAc...) asparagine" evidence="1">
    <location>
        <position position="19"/>
    </location>
</feature>
<feature type="disulfide bond" evidence="2">
    <location>
        <begin position="101"/>
        <end position="179"/>
    </location>
</feature>
<sequence>MDLINSSTHVINVSTSLTNSTGVPTPAPKTIIAASLFMAFIIGVISNGLYLWMLQFKMQRTVNTLLFFHLILSYFISTLILPFMATSFLQDNHWVFGSVLCKAFNSTLSVSMFASVFFLSAISVARYYLILHPVWSQQHRTPHWASRIALQIWISATILSIPYLVFRTTHDDHKGRIKCQNNYIVSTDWESKEHQTLGQWIHAACFVGRFLLGFLLPFLVIIFCYKRVATKMKEKGLFKSSKPFKVMVTAVISFFVCWMPYHVHSGLVLTKSQPLPLHLTLGLAVVTISFNTVVSPVLYLFTGENFKVFKKSILALFNSTFSDISSTERTQTLNSETEI</sequence>
<organism>
    <name type="scientific">Mus musculus</name>
    <name type="common">Mouse</name>
    <dbReference type="NCBI Taxonomy" id="10090"/>
    <lineage>
        <taxon>Eukaryota</taxon>
        <taxon>Metazoa</taxon>
        <taxon>Chordata</taxon>
        <taxon>Craniata</taxon>
        <taxon>Vertebrata</taxon>
        <taxon>Euteleostomi</taxon>
        <taxon>Mammalia</taxon>
        <taxon>Eutheria</taxon>
        <taxon>Euarchontoglires</taxon>
        <taxon>Glires</taxon>
        <taxon>Rodentia</taxon>
        <taxon>Myomorpha</taxon>
        <taxon>Muroidea</taxon>
        <taxon>Muridae</taxon>
        <taxon>Murinae</taxon>
        <taxon>Mus</taxon>
        <taxon>Mus</taxon>
    </lineage>
</organism>
<dbReference type="EMBL" id="AF045766">
    <property type="protein sequence ID" value="AAC40152.1"/>
    <property type="molecule type" value="mRNA"/>
</dbReference>
<dbReference type="EMBL" id="BC064084">
    <property type="protein sequence ID" value="AAH64084.1"/>
    <property type="molecule type" value="mRNA"/>
</dbReference>
<dbReference type="CCDS" id="CCDS25904.1"/>
<dbReference type="RefSeq" id="NP_032185.1">
    <property type="nucleotide sequence ID" value="NM_008159.3"/>
</dbReference>
<dbReference type="SMR" id="O88416"/>
<dbReference type="FunCoup" id="O88416">
    <property type="interactions" value="752"/>
</dbReference>
<dbReference type="STRING" id="10090.ENSMUSP00000048059"/>
<dbReference type="GlyCosmos" id="O88416">
    <property type="glycosylation" value="3 sites, No reported glycans"/>
</dbReference>
<dbReference type="GlyGen" id="O88416">
    <property type="glycosylation" value="4 sites"/>
</dbReference>
<dbReference type="PhosphoSitePlus" id="O88416"/>
<dbReference type="PaxDb" id="10090-ENSMUSP00000048059"/>
<dbReference type="Antibodypedia" id="78028">
    <property type="antibodies" value="11 antibodies from 8 providers"/>
</dbReference>
<dbReference type="DNASU" id="14762"/>
<dbReference type="Ensembl" id="ENSMUST00000040161.5">
    <property type="protein sequence ID" value="ENSMUSP00000048059.5"/>
    <property type="gene ID" value="ENSMUSG00000035148.5"/>
</dbReference>
<dbReference type="GeneID" id="14762"/>
<dbReference type="KEGG" id="mmu:14762"/>
<dbReference type="UCSC" id="uc007nnf.1">
    <property type="organism name" value="mouse"/>
</dbReference>
<dbReference type="AGR" id="MGI:1277106"/>
<dbReference type="CTD" id="2856"/>
<dbReference type="MGI" id="MGI:1277106">
    <property type="gene designation" value="Gpr33"/>
</dbReference>
<dbReference type="VEuPathDB" id="HostDB:ENSMUSG00000035148"/>
<dbReference type="eggNOG" id="KOG3656">
    <property type="taxonomic scope" value="Eukaryota"/>
</dbReference>
<dbReference type="GeneTree" id="ENSGT01020000230438"/>
<dbReference type="HOGENOM" id="CLU_009579_8_0_1"/>
<dbReference type="InParanoid" id="O88416"/>
<dbReference type="OMA" id="QHRTPRW"/>
<dbReference type="OrthoDB" id="6117944at2759"/>
<dbReference type="PhylomeDB" id="O88416"/>
<dbReference type="TreeFam" id="TF330976"/>
<dbReference type="BioGRID-ORCS" id="14762">
    <property type="hits" value="2 hits in 76 CRISPR screens"/>
</dbReference>
<dbReference type="ChiTaRS" id="Gpr33">
    <property type="organism name" value="mouse"/>
</dbReference>
<dbReference type="PRO" id="PR:O88416"/>
<dbReference type="Proteomes" id="UP000000589">
    <property type="component" value="Chromosome 12"/>
</dbReference>
<dbReference type="RNAct" id="O88416">
    <property type="molecule type" value="protein"/>
</dbReference>
<dbReference type="Bgee" id="ENSMUSG00000035148">
    <property type="expression patterns" value="Expressed in lumbar subsegment of spinal cord and 17 other cell types or tissues"/>
</dbReference>
<dbReference type="ExpressionAtlas" id="O88416">
    <property type="expression patterns" value="baseline and differential"/>
</dbReference>
<dbReference type="GO" id="GO:0005886">
    <property type="term" value="C:plasma membrane"/>
    <property type="evidence" value="ECO:0007669"/>
    <property type="project" value="UniProtKB-SubCell"/>
</dbReference>
<dbReference type="GO" id="GO:0004930">
    <property type="term" value="F:G protein-coupled receptor activity"/>
    <property type="evidence" value="ECO:0007669"/>
    <property type="project" value="UniProtKB-KW"/>
</dbReference>
<dbReference type="CDD" id="cd15120">
    <property type="entry name" value="7tmA_GPR33"/>
    <property type="match status" value="1"/>
</dbReference>
<dbReference type="FunFam" id="1.20.1070.10:FF:000034">
    <property type="entry name" value="G-protein coupled receptor 1"/>
    <property type="match status" value="1"/>
</dbReference>
<dbReference type="Gene3D" id="1.20.1070.10">
    <property type="entry name" value="Rhodopsin 7-helix transmembrane proteins"/>
    <property type="match status" value="1"/>
</dbReference>
<dbReference type="InterPro" id="IPR000826">
    <property type="entry name" value="Formyl_rcpt-rel"/>
</dbReference>
<dbReference type="InterPro" id="IPR000276">
    <property type="entry name" value="GPCR_Rhodpsn"/>
</dbReference>
<dbReference type="InterPro" id="IPR017452">
    <property type="entry name" value="GPCR_Rhodpsn_7TM"/>
</dbReference>
<dbReference type="PANTHER" id="PTHR24225">
    <property type="entry name" value="CHEMOTACTIC RECEPTOR"/>
    <property type="match status" value="1"/>
</dbReference>
<dbReference type="PANTHER" id="PTHR24225:SF5">
    <property type="entry name" value="G-PROTEIN COUPLED RECEPTOR 33-RELATED"/>
    <property type="match status" value="1"/>
</dbReference>
<dbReference type="Pfam" id="PF00001">
    <property type="entry name" value="7tm_1"/>
    <property type="match status" value="1"/>
</dbReference>
<dbReference type="PRINTS" id="PR00526">
    <property type="entry name" value="FMETLEUPHER"/>
</dbReference>
<dbReference type="PRINTS" id="PR00237">
    <property type="entry name" value="GPCRRHODOPSN"/>
</dbReference>
<dbReference type="SUPFAM" id="SSF81321">
    <property type="entry name" value="Family A G protein-coupled receptor-like"/>
    <property type="match status" value="1"/>
</dbReference>
<dbReference type="PROSITE" id="PS50262">
    <property type="entry name" value="G_PROTEIN_RECEP_F1_2"/>
    <property type="match status" value="1"/>
</dbReference>
<evidence type="ECO:0000255" key="1"/>
<evidence type="ECO:0000255" key="2">
    <source>
        <dbReference type="PROSITE-ProRule" id="PRU00521"/>
    </source>
</evidence>
<evidence type="ECO:0000269" key="3">
    <source>
    </source>
</evidence>